<sequence>MTFLIRWLFSTNHKDIGTLYLIFGAWAGMVGTALSLLIRAELGQPGTLLGDDQIYNVIVTAHAFVMIFFMVMPVMIGGFGNWLVPLMIGAPDMAFPRMNNMSFWLLPPSFLLLLASSTVEAGVGTGWTVYPPLAGNLAHAGASVDLAIFSLHLAGVSSILGAINFITTAINMKPPALSQYQTPLFVWSVLITAILLLLSLPVLAAGITMLLTDRNLNTTFFDPAGGGDPILYQHLFWFFGHPEVYILILPGFGIISHVVAYYAGKKEPFGYMGMVWAMLSIGFLGFIVWAHHMFTVGMDVDTRAYFTSATMIIAIPTGIKVFSWLATLHGGTIKWDP</sequence>
<accession>O03539</accession>
<protein>
    <recommendedName>
        <fullName>Cytochrome c oxidase subunit 1</fullName>
        <ecNumber>7.1.1.9</ecNumber>
    </recommendedName>
    <alternativeName>
        <fullName>Cytochrome c oxidase polypeptide I</fullName>
    </alternativeName>
</protein>
<proteinExistence type="inferred from homology"/>
<gene>
    <name type="primary">MT-CO1</name>
    <name type="synonym">COI</name>
    <name type="synonym">COXI</name>
    <name type="synonym">MTCO1</name>
</gene>
<reference key="1">
    <citation type="book" date="1997" name="Avian molecular evolution and systematics">
        <title>Phylogenetic relationships of the ratite birds: resolving conflicts between molecular and morphological data sets.</title>
        <editorList>
            <person name="Mindell D.P."/>
        </editorList>
        <authorList>
            <person name="Lee K."/>
            <person name="Feinstein J."/>
            <person name="Cracraft J."/>
        </authorList>
    </citation>
    <scope>NUCLEOTIDE SEQUENCE [GENOMIC DNA]</scope>
</reference>
<comment type="function">
    <text evidence="3">Component of the cytochrome c oxidase, the last enzyme in the mitochondrial electron transport chain which drives oxidative phosphorylation. The respiratory chain contains 3 multisubunit complexes succinate dehydrogenase (complex II, CII), ubiquinol-cytochrome c oxidoreductase (cytochrome b-c1 complex, complex III, CIII) and cytochrome c oxidase (complex IV, CIV), that cooperate to transfer electrons derived from NADH and succinate to molecular oxygen, creating an electrochemical gradient over the inner membrane that drives transmembrane transport and the ATP synthase. Cytochrome c oxidase is the component of the respiratory chain that catalyzes the reduction of oxygen to water. Electrons originating from reduced cytochrome c in the intermembrane space (IMS) are transferred via the dinuclear copper A center (CU(A)) of subunit 2 and heme A of subunit 1 to the active site in subunit 1, a binuclear center (BNC) formed by heme A3 and copper B (CU(B)). The BNC reduces molecular oxygen to 2 water molecules using 4 electrons from cytochrome c in the IMS and 4 protons from the mitochondrial matrix.</text>
</comment>
<comment type="catalytic activity">
    <reaction evidence="3">
        <text>4 Fe(II)-[cytochrome c] + O2 + 8 H(+)(in) = 4 Fe(III)-[cytochrome c] + 2 H2O + 4 H(+)(out)</text>
        <dbReference type="Rhea" id="RHEA:11436"/>
        <dbReference type="Rhea" id="RHEA-COMP:10350"/>
        <dbReference type="Rhea" id="RHEA-COMP:14399"/>
        <dbReference type="ChEBI" id="CHEBI:15377"/>
        <dbReference type="ChEBI" id="CHEBI:15378"/>
        <dbReference type="ChEBI" id="CHEBI:15379"/>
        <dbReference type="ChEBI" id="CHEBI:29033"/>
        <dbReference type="ChEBI" id="CHEBI:29034"/>
        <dbReference type="EC" id="7.1.1.9"/>
    </reaction>
    <physiologicalReaction direction="left-to-right" evidence="3">
        <dbReference type="Rhea" id="RHEA:11437"/>
    </physiologicalReaction>
</comment>
<comment type="cofactor">
    <cofactor evidence="2">
        <name>heme</name>
        <dbReference type="ChEBI" id="CHEBI:30413"/>
    </cofactor>
    <text evidence="2">Binds 2 heme A groups non-covalently per subunit.</text>
</comment>
<comment type="cofactor">
    <cofactor evidence="2">
        <name>Cu cation</name>
        <dbReference type="ChEBI" id="CHEBI:23378"/>
    </cofactor>
    <text evidence="2">Binds a copper B center.</text>
</comment>
<comment type="pathway">
    <text evidence="3">Energy metabolism; oxidative phosphorylation.</text>
</comment>
<comment type="subunit">
    <text evidence="1 2">Component of the cytochrome c oxidase (complex IV, CIV), a multisubunit enzyme composed of 14 subunits. The complex is composed of a catalytic core of 3 subunits MT-CO1, MT-CO2 and MT-CO3, encoded in the mitochondrial DNA, and 11 supernumerary subunits COX4I, COX5A, COX5B, COX6A, COX6B, COX6C, COX7A, COX7B, COX7C, COX8 and NDUFA4, which are encoded in the nuclear genome. The complex exists as a monomer or a dimer and forms supercomplexes (SCs) in the inner mitochondrial membrane with NADH-ubiquinone oxidoreductase (complex I, CI) and ubiquinol-cytochrome c oxidoreductase (cytochrome b-c1 complex, complex III, CIII), resulting in different assemblies (supercomplex SCI(1)III(2)IV(1) and megacomplex MCI(2)III(2)IV(2)) (By similarity). As a newly synthesized protein, rapidly incorporates into a multi-subunit assembly intermediate in the inner membrane, called MITRAC (mitochondrial translation regulation assembly intermediate of cytochrome c oxidase) complex, whose core components are COA3/MITRAC12 and COX14. Within the MITRAC complex, interacts with COA3 and with SMIM20/MITRAC7; the interaction with SMIM20 stabilizes the newly synthesized MT-CO1 and prevents its premature turnover. Interacts with TMEM177 in a COX20-dependent manner (By similarity).</text>
</comment>
<comment type="subcellular location">
    <subcellularLocation>
        <location evidence="2">Mitochondrion inner membrane</location>
        <topology evidence="2">Multi-pass membrane protein</topology>
    </subcellularLocation>
</comment>
<comment type="similarity">
    <text evidence="4">Belongs to the heme-copper respiratory oxidase family.</text>
</comment>
<dbReference type="EC" id="7.1.1.9"/>
<dbReference type="EMBL" id="U76060">
    <property type="protein sequence ID" value="AAB61322.1"/>
    <property type="molecule type" value="Genomic_DNA"/>
</dbReference>
<dbReference type="SMR" id="O03539"/>
<dbReference type="UniPathway" id="UPA00705"/>
<dbReference type="Proteomes" id="UP000694420">
    <property type="component" value="Unplaced"/>
</dbReference>
<dbReference type="GO" id="GO:0005743">
    <property type="term" value="C:mitochondrial inner membrane"/>
    <property type="evidence" value="ECO:0007669"/>
    <property type="project" value="UniProtKB-SubCell"/>
</dbReference>
<dbReference type="GO" id="GO:0045277">
    <property type="term" value="C:respiratory chain complex IV"/>
    <property type="evidence" value="ECO:0000250"/>
    <property type="project" value="UniProtKB"/>
</dbReference>
<dbReference type="GO" id="GO:0004129">
    <property type="term" value="F:cytochrome-c oxidase activity"/>
    <property type="evidence" value="ECO:0007669"/>
    <property type="project" value="UniProtKB-EC"/>
</dbReference>
<dbReference type="GO" id="GO:0020037">
    <property type="term" value="F:heme binding"/>
    <property type="evidence" value="ECO:0007669"/>
    <property type="project" value="InterPro"/>
</dbReference>
<dbReference type="GO" id="GO:0046872">
    <property type="term" value="F:metal ion binding"/>
    <property type="evidence" value="ECO:0007669"/>
    <property type="project" value="UniProtKB-KW"/>
</dbReference>
<dbReference type="GO" id="GO:0015990">
    <property type="term" value="P:electron transport coupled proton transport"/>
    <property type="evidence" value="ECO:0007669"/>
    <property type="project" value="TreeGrafter"/>
</dbReference>
<dbReference type="GO" id="GO:0006123">
    <property type="term" value="P:mitochondrial electron transport, cytochrome c to oxygen"/>
    <property type="evidence" value="ECO:0007669"/>
    <property type="project" value="TreeGrafter"/>
</dbReference>
<dbReference type="Gene3D" id="1.20.210.10">
    <property type="entry name" value="Cytochrome c oxidase-like, subunit I domain"/>
    <property type="match status" value="1"/>
</dbReference>
<dbReference type="InterPro" id="IPR023616">
    <property type="entry name" value="Cyt_c_oxase-like_su1_dom"/>
</dbReference>
<dbReference type="InterPro" id="IPR036927">
    <property type="entry name" value="Cyt_c_oxase-like_su1_sf"/>
</dbReference>
<dbReference type="InterPro" id="IPR000883">
    <property type="entry name" value="Cyt_C_Oxase_1"/>
</dbReference>
<dbReference type="InterPro" id="IPR023615">
    <property type="entry name" value="Cyt_c_Oxase_su1_BS"/>
</dbReference>
<dbReference type="PANTHER" id="PTHR10422">
    <property type="entry name" value="CYTOCHROME C OXIDASE SUBUNIT 1"/>
    <property type="match status" value="1"/>
</dbReference>
<dbReference type="PANTHER" id="PTHR10422:SF18">
    <property type="entry name" value="CYTOCHROME C OXIDASE SUBUNIT 1"/>
    <property type="match status" value="1"/>
</dbReference>
<dbReference type="Pfam" id="PF00115">
    <property type="entry name" value="COX1"/>
    <property type="match status" value="1"/>
</dbReference>
<dbReference type="PRINTS" id="PR01165">
    <property type="entry name" value="CYCOXIDASEI"/>
</dbReference>
<dbReference type="SUPFAM" id="SSF81442">
    <property type="entry name" value="Cytochrome c oxidase subunit I-like"/>
    <property type="match status" value="1"/>
</dbReference>
<dbReference type="PROSITE" id="PS50855">
    <property type="entry name" value="COX1"/>
    <property type="match status" value="1"/>
</dbReference>
<dbReference type="PROSITE" id="PS00077">
    <property type="entry name" value="COX1_CUB"/>
    <property type="match status" value="1"/>
</dbReference>
<organism>
    <name type="scientific">Nothoprocta perdicaria</name>
    <name type="common">Chilean tinamou</name>
    <name type="synonym">Crypturus perdicarius</name>
    <dbReference type="NCBI Taxonomy" id="30464"/>
    <lineage>
        <taxon>Eukaryota</taxon>
        <taxon>Metazoa</taxon>
        <taxon>Chordata</taxon>
        <taxon>Craniata</taxon>
        <taxon>Vertebrata</taxon>
        <taxon>Euteleostomi</taxon>
        <taxon>Archelosauria</taxon>
        <taxon>Archosauria</taxon>
        <taxon>Dinosauria</taxon>
        <taxon>Saurischia</taxon>
        <taxon>Theropoda</taxon>
        <taxon>Coelurosauria</taxon>
        <taxon>Aves</taxon>
        <taxon>Palaeognathae</taxon>
        <taxon>Tinamiformes</taxon>
        <taxon>Tinamidae</taxon>
        <taxon>Nothoprocta</taxon>
    </lineage>
</organism>
<geneLocation type="mitochondrion"/>
<feature type="chain" id="PRO_0000183367" description="Cytochrome c oxidase subunit 1">
    <location>
        <begin position="1"/>
        <end position="337" status="greater than"/>
    </location>
</feature>
<feature type="topological domain" description="Mitochondrial matrix" evidence="2">
    <location>
        <begin position="1"/>
        <end position="12"/>
    </location>
</feature>
<feature type="transmembrane region" description="Helical; Name=I" evidence="2">
    <location>
        <begin position="13"/>
        <end position="41"/>
    </location>
</feature>
<feature type="topological domain" description="Mitochondrial intermembrane" evidence="2">
    <location>
        <begin position="42"/>
        <end position="51"/>
    </location>
</feature>
<feature type="transmembrane region" description="Helical; Name=II" evidence="2">
    <location>
        <begin position="52"/>
        <end position="87"/>
    </location>
</feature>
<feature type="topological domain" description="Mitochondrial matrix" evidence="2">
    <location>
        <begin position="88"/>
        <end position="95"/>
    </location>
</feature>
<feature type="transmembrane region" description="Helical; Name=III" evidence="2">
    <location>
        <begin position="96"/>
        <end position="118"/>
    </location>
</feature>
<feature type="topological domain" description="Mitochondrial intermembrane" evidence="2">
    <location>
        <begin position="119"/>
        <end position="141"/>
    </location>
</feature>
<feature type="transmembrane region" description="Helical; Name=IV" evidence="2">
    <location>
        <begin position="142"/>
        <end position="171"/>
    </location>
</feature>
<feature type="topological domain" description="Mitochondrial matrix" evidence="2">
    <location>
        <begin position="172"/>
        <end position="183"/>
    </location>
</feature>
<feature type="transmembrane region" description="Helical; Name=V" evidence="2">
    <location>
        <begin position="184"/>
        <end position="213"/>
    </location>
</feature>
<feature type="topological domain" description="Mitochondrial intermembrane" evidence="2">
    <location>
        <begin position="214"/>
        <end position="228"/>
    </location>
</feature>
<feature type="transmembrane region" description="Helical; Name=VI" evidence="2">
    <location>
        <begin position="229"/>
        <end position="262"/>
    </location>
</feature>
<feature type="topological domain" description="Mitochondrial matrix" evidence="2">
    <location>
        <begin position="263"/>
        <end position="270"/>
    </location>
</feature>
<feature type="transmembrane region" description="Helical; Name=VII" evidence="2">
    <location>
        <begin position="271"/>
        <end position="287"/>
    </location>
</feature>
<feature type="topological domain" description="Mitochondrial intermembrane" evidence="2">
    <location>
        <begin position="288"/>
        <end position="299"/>
    </location>
</feature>
<feature type="transmembrane region" description="Helical; Name=VIII" evidence="2">
    <location>
        <begin position="300"/>
        <end position="328"/>
    </location>
</feature>
<feature type="topological domain" description="Mitochondrial matrix" evidence="2">
    <location>
        <begin position="329"/>
        <end position="337" status="greater than"/>
    </location>
</feature>
<feature type="binding site" evidence="2">
    <location>
        <position position="41"/>
    </location>
    <ligand>
        <name>Na(+)</name>
        <dbReference type="ChEBI" id="CHEBI:29101"/>
    </ligand>
</feature>
<feature type="binding site" evidence="2">
    <location>
        <position position="46"/>
    </location>
    <ligand>
        <name>Na(+)</name>
        <dbReference type="ChEBI" id="CHEBI:29101"/>
    </ligand>
</feature>
<feature type="binding site" description="axial binding residue" evidence="2">
    <location>
        <position position="62"/>
    </location>
    <ligand>
        <name>Fe(II)-heme a</name>
        <dbReference type="ChEBI" id="CHEBI:61715"/>
        <note>low-spin</note>
    </ligand>
    <ligandPart>
        <name>Fe</name>
        <dbReference type="ChEBI" id="CHEBI:18248"/>
    </ligandPart>
</feature>
<feature type="binding site" evidence="2">
    <location>
        <position position="241"/>
    </location>
    <ligand>
        <name>Cu cation</name>
        <dbReference type="ChEBI" id="CHEBI:23378"/>
        <label>B</label>
    </ligand>
</feature>
<feature type="binding site" evidence="2">
    <location>
        <position position="245"/>
    </location>
    <ligand>
        <name>O2</name>
        <dbReference type="ChEBI" id="CHEBI:15379"/>
    </ligand>
</feature>
<feature type="binding site" evidence="2">
    <location>
        <position position="291"/>
    </location>
    <ligand>
        <name>Cu cation</name>
        <dbReference type="ChEBI" id="CHEBI:23378"/>
        <label>B</label>
    </ligand>
</feature>
<feature type="binding site" evidence="2">
    <location>
        <position position="292"/>
    </location>
    <ligand>
        <name>Cu cation</name>
        <dbReference type="ChEBI" id="CHEBI:23378"/>
        <label>B</label>
    </ligand>
</feature>
<feature type="cross-link" description="1'-histidyl-3'-tyrosine (His-Tyr)" evidence="2">
    <location>
        <begin position="241"/>
        <end position="245"/>
    </location>
</feature>
<feature type="non-terminal residue">
    <location>
        <position position="337"/>
    </location>
</feature>
<name>COX1_NOTPE</name>
<keyword id="KW-0106">Calcium</keyword>
<keyword id="KW-0186">Copper</keyword>
<keyword id="KW-0249">Electron transport</keyword>
<keyword id="KW-0349">Heme</keyword>
<keyword id="KW-0408">Iron</keyword>
<keyword id="KW-0472">Membrane</keyword>
<keyword id="KW-0479">Metal-binding</keyword>
<keyword id="KW-0496">Mitochondrion</keyword>
<keyword id="KW-0999">Mitochondrion inner membrane</keyword>
<keyword id="KW-1185">Reference proteome</keyword>
<keyword id="KW-0679">Respiratory chain</keyword>
<keyword id="KW-0915">Sodium</keyword>
<keyword id="KW-1278">Translocase</keyword>
<keyword id="KW-0812">Transmembrane</keyword>
<keyword id="KW-1133">Transmembrane helix</keyword>
<keyword id="KW-0813">Transport</keyword>
<evidence type="ECO:0000250" key="1">
    <source>
        <dbReference type="UniProtKB" id="P00395"/>
    </source>
</evidence>
<evidence type="ECO:0000250" key="2">
    <source>
        <dbReference type="UniProtKB" id="P00396"/>
    </source>
</evidence>
<evidence type="ECO:0000250" key="3">
    <source>
        <dbReference type="UniProtKB" id="P00401"/>
    </source>
</evidence>
<evidence type="ECO:0000305" key="4"/>